<dbReference type="EC" id="2.1.1.33" evidence="2"/>
<dbReference type="EMBL" id="CP000563">
    <property type="protein sequence ID" value="ABN62520.1"/>
    <property type="molecule type" value="Genomic_DNA"/>
</dbReference>
<dbReference type="RefSeq" id="WP_011847376.1">
    <property type="nucleotide sequence ID" value="NC_009052.1"/>
</dbReference>
<dbReference type="SMR" id="A3D707"/>
<dbReference type="STRING" id="325240.Sbal_3038"/>
<dbReference type="KEGG" id="sbl:Sbal_3038"/>
<dbReference type="HOGENOM" id="CLU_050910_0_1_6"/>
<dbReference type="OrthoDB" id="9802090at2"/>
<dbReference type="UniPathway" id="UPA00989"/>
<dbReference type="Proteomes" id="UP000001557">
    <property type="component" value="Chromosome"/>
</dbReference>
<dbReference type="GO" id="GO:0043527">
    <property type="term" value="C:tRNA methyltransferase complex"/>
    <property type="evidence" value="ECO:0007669"/>
    <property type="project" value="TreeGrafter"/>
</dbReference>
<dbReference type="GO" id="GO:0008176">
    <property type="term" value="F:tRNA (guanine(46)-N7)-methyltransferase activity"/>
    <property type="evidence" value="ECO:0007669"/>
    <property type="project" value="UniProtKB-UniRule"/>
</dbReference>
<dbReference type="CDD" id="cd02440">
    <property type="entry name" value="AdoMet_MTases"/>
    <property type="match status" value="1"/>
</dbReference>
<dbReference type="FunFam" id="3.40.50.150:FF:000024">
    <property type="entry name" value="tRNA (guanine-N(7)-)-methyltransferase"/>
    <property type="match status" value="1"/>
</dbReference>
<dbReference type="Gene3D" id="3.40.50.150">
    <property type="entry name" value="Vaccinia Virus protein VP39"/>
    <property type="match status" value="1"/>
</dbReference>
<dbReference type="HAMAP" id="MF_01057">
    <property type="entry name" value="tRNA_methyltr_TrmB"/>
    <property type="match status" value="1"/>
</dbReference>
<dbReference type="InterPro" id="IPR029063">
    <property type="entry name" value="SAM-dependent_MTases_sf"/>
</dbReference>
<dbReference type="InterPro" id="IPR003358">
    <property type="entry name" value="tRNA_(Gua-N-7)_MeTrfase_Trmb"/>
</dbReference>
<dbReference type="InterPro" id="IPR055361">
    <property type="entry name" value="tRNA_methyltr_TrmB_bact"/>
</dbReference>
<dbReference type="NCBIfam" id="TIGR00091">
    <property type="entry name" value="tRNA (guanosine(46)-N7)-methyltransferase TrmB"/>
    <property type="match status" value="1"/>
</dbReference>
<dbReference type="PANTHER" id="PTHR23417">
    <property type="entry name" value="3-DEOXY-D-MANNO-OCTULOSONIC-ACID TRANSFERASE/TRNA GUANINE-N 7 - -METHYLTRANSFERASE"/>
    <property type="match status" value="1"/>
</dbReference>
<dbReference type="PANTHER" id="PTHR23417:SF14">
    <property type="entry name" value="PENTACOTRIPEPTIDE-REPEAT REGION OF PRORP DOMAIN-CONTAINING PROTEIN"/>
    <property type="match status" value="1"/>
</dbReference>
<dbReference type="Pfam" id="PF02390">
    <property type="entry name" value="Methyltransf_4"/>
    <property type="match status" value="1"/>
</dbReference>
<dbReference type="SUPFAM" id="SSF53335">
    <property type="entry name" value="S-adenosyl-L-methionine-dependent methyltransferases"/>
    <property type="match status" value="1"/>
</dbReference>
<dbReference type="PROSITE" id="PS51625">
    <property type="entry name" value="SAM_MT_TRMB"/>
    <property type="match status" value="1"/>
</dbReference>
<proteinExistence type="inferred from homology"/>
<sequence length="238" mass="26831">MSEVTTAEFNEEGKYLRKIRSFVLREGRLTKGQAQAIESQWPTMGLDYSPTPLVLSDVFGREADTVLEIGFGMGASLVQMAKDAPEQNFIGIEVHKPGVGSCLSDAAIAGVTNLRVYHHDAMEVLEHAIADGSLARVQLFFPDPWHKKRHHKRRIVQAEFAELIRRKLKIGGVFHMATDWEEYSEHMLEVMQAAPGYQNQSSDGTVVPRPDHRPLTKFEARGHRLGHGVWDLMFERIA</sequence>
<accession>A3D707</accession>
<keyword id="KW-0489">Methyltransferase</keyword>
<keyword id="KW-1185">Reference proteome</keyword>
<keyword id="KW-0949">S-adenosyl-L-methionine</keyword>
<keyword id="KW-0808">Transferase</keyword>
<keyword id="KW-0819">tRNA processing</keyword>
<protein>
    <recommendedName>
        <fullName evidence="2">tRNA (guanine-N(7)-)-methyltransferase</fullName>
        <ecNumber evidence="2">2.1.1.33</ecNumber>
    </recommendedName>
    <alternativeName>
        <fullName evidence="2">tRNA (guanine(46)-N(7))-methyltransferase</fullName>
    </alternativeName>
    <alternativeName>
        <fullName evidence="2">tRNA(m7G46)-methyltransferase</fullName>
    </alternativeName>
</protein>
<organism>
    <name type="scientific">Shewanella baltica (strain OS155 / ATCC BAA-1091)</name>
    <dbReference type="NCBI Taxonomy" id="325240"/>
    <lineage>
        <taxon>Bacteria</taxon>
        <taxon>Pseudomonadati</taxon>
        <taxon>Pseudomonadota</taxon>
        <taxon>Gammaproteobacteria</taxon>
        <taxon>Alteromonadales</taxon>
        <taxon>Shewanellaceae</taxon>
        <taxon>Shewanella</taxon>
    </lineage>
</organism>
<reference key="1">
    <citation type="submission" date="2007-02" db="EMBL/GenBank/DDBJ databases">
        <title>Complete sequence of chromosome of Shewanella baltica OS155.</title>
        <authorList>
            <consortium name="US DOE Joint Genome Institute"/>
            <person name="Copeland A."/>
            <person name="Lucas S."/>
            <person name="Lapidus A."/>
            <person name="Barry K."/>
            <person name="Detter J.C."/>
            <person name="Glavina del Rio T."/>
            <person name="Hammon N."/>
            <person name="Israni S."/>
            <person name="Dalin E."/>
            <person name="Tice H."/>
            <person name="Pitluck S."/>
            <person name="Sims D.R."/>
            <person name="Brettin T."/>
            <person name="Bruce D."/>
            <person name="Han C."/>
            <person name="Tapia R."/>
            <person name="Brainard J."/>
            <person name="Schmutz J."/>
            <person name="Larimer F."/>
            <person name="Land M."/>
            <person name="Hauser L."/>
            <person name="Kyrpides N."/>
            <person name="Mikhailova N."/>
            <person name="Brettar I."/>
            <person name="Klappenbach J."/>
            <person name="Konstantinidis K."/>
            <person name="Rodrigues J."/>
            <person name="Tiedje J."/>
            <person name="Richardson P."/>
        </authorList>
    </citation>
    <scope>NUCLEOTIDE SEQUENCE [LARGE SCALE GENOMIC DNA]</scope>
    <source>
        <strain>OS155 / ATCC BAA-1091</strain>
    </source>
</reference>
<name>TRMB_SHEB5</name>
<gene>
    <name evidence="2" type="primary">trmB</name>
    <name type="ordered locus">Sbal_3038</name>
</gene>
<feature type="chain" id="PRO_1000064408" description="tRNA (guanine-N(7)-)-methyltransferase">
    <location>
        <begin position="1"/>
        <end position="238"/>
    </location>
</feature>
<feature type="active site" evidence="1">
    <location>
        <position position="143"/>
    </location>
</feature>
<feature type="binding site" evidence="2">
    <location>
        <position position="68"/>
    </location>
    <ligand>
        <name>S-adenosyl-L-methionine</name>
        <dbReference type="ChEBI" id="CHEBI:59789"/>
    </ligand>
</feature>
<feature type="binding site" evidence="2">
    <location>
        <position position="93"/>
    </location>
    <ligand>
        <name>S-adenosyl-L-methionine</name>
        <dbReference type="ChEBI" id="CHEBI:59789"/>
    </ligand>
</feature>
<feature type="binding site" evidence="2">
    <location>
        <position position="120"/>
    </location>
    <ligand>
        <name>S-adenosyl-L-methionine</name>
        <dbReference type="ChEBI" id="CHEBI:59789"/>
    </ligand>
</feature>
<feature type="binding site" evidence="2">
    <location>
        <position position="143"/>
    </location>
    <ligand>
        <name>S-adenosyl-L-methionine</name>
        <dbReference type="ChEBI" id="CHEBI:59789"/>
    </ligand>
</feature>
<feature type="binding site" evidence="2">
    <location>
        <position position="147"/>
    </location>
    <ligand>
        <name>substrate</name>
    </ligand>
</feature>
<feature type="binding site" evidence="2">
    <location>
        <position position="179"/>
    </location>
    <ligand>
        <name>substrate</name>
    </ligand>
</feature>
<feature type="binding site" evidence="2">
    <location>
        <begin position="216"/>
        <end position="219"/>
    </location>
    <ligand>
        <name>substrate</name>
    </ligand>
</feature>
<comment type="function">
    <text evidence="2">Catalyzes the formation of N(7)-methylguanine at position 46 (m7G46) in tRNA.</text>
</comment>
<comment type="catalytic activity">
    <reaction evidence="2">
        <text>guanosine(46) in tRNA + S-adenosyl-L-methionine = N(7)-methylguanosine(46) in tRNA + S-adenosyl-L-homocysteine</text>
        <dbReference type="Rhea" id="RHEA:42708"/>
        <dbReference type="Rhea" id="RHEA-COMP:10188"/>
        <dbReference type="Rhea" id="RHEA-COMP:10189"/>
        <dbReference type="ChEBI" id="CHEBI:57856"/>
        <dbReference type="ChEBI" id="CHEBI:59789"/>
        <dbReference type="ChEBI" id="CHEBI:74269"/>
        <dbReference type="ChEBI" id="CHEBI:74480"/>
        <dbReference type="EC" id="2.1.1.33"/>
    </reaction>
</comment>
<comment type="pathway">
    <text evidence="2">tRNA modification; N(7)-methylguanine-tRNA biosynthesis.</text>
</comment>
<comment type="similarity">
    <text evidence="2">Belongs to the class I-like SAM-binding methyltransferase superfamily. TrmB family.</text>
</comment>
<evidence type="ECO:0000250" key="1"/>
<evidence type="ECO:0000255" key="2">
    <source>
        <dbReference type="HAMAP-Rule" id="MF_01057"/>
    </source>
</evidence>